<name>ILVC_BURMS</name>
<comment type="function">
    <text evidence="1">Involved in the biosynthesis of branched-chain amino acids (BCAA). Catalyzes an alkyl-migration followed by a ketol-acid reduction of (S)-2-acetolactate (S2AL) to yield (R)-2,3-dihydroxy-isovalerate. In the isomerase reaction, S2AL is rearranged via a Mg-dependent methyl migration to produce 3-hydroxy-3-methyl-2-ketobutyrate (HMKB). In the reductase reaction, this 2-ketoacid undergoes a metal-dependent reduction by NADPH to yield (R)-2,3-dihydroxy-isovalerate.</text>
</comment>
<comment type="catalytic activity">
    <reaction evidence="1">
        <text>(2R)-2,3-dihydroxy-3-methylbutanoate + NADP(+) = (2S)-2-acetolactate + NADPH + H(+)</text>
        <dbReference type="Rhea" id="RHEA:22068"/>
        <dbReference type="ChEBI" id="CHEBI:15378"/>
        <dbReference type="ChEBI" id="CHEBI:49072"/>
        <dbReference type="ChEBI" id="CHEBI:57783"/>
        <dbReference type="ChEBI" id="CHEBI:58349"/>
        <dbReference type="ChEBI" id="CHEBI:58476"/>
        <dbReference type="EC" id="1.1.1.86"/>
    </reaction>
</comment>
<comment type="catalytic activity">
    <reaction evidence="1">
        <text>(2R,3R)-2,3-dihydroxy-3-methylpentanoate + NADP(+) = (S)-2-ethyl-2-hydroxy-3-oxobutanoate + NADPH + H(+)</text>
        <dbReference type="Rhea" id="RHEA:13493"/>
        <dbReference type="ChEBI" id="CHEBI:15378"/>
        <dbReference type="ChEBI" id="CHEBI:49256"/>
        <dbReference type="ChEBI" id="CHEBI:49258"/>
        <dbReference type="ChEBI" id="CHEBI:57783"/>
        <dbReference type="ChEBI" id="CHEBI:58349"/>
        <dbReference type="EC" id="1.1.1.86"/>
    </reaction>
</comment>
<comment type="cofactor">
    <cofactor evidence="1">
        <name>Mg(2+)</name>
        <dbReference type="ChEBI" id="CHEBI:18420"/>
    </cofactor>
    <text evidence="1">Binds 2 magnesium ions per subunit.</text>
</comment>
<comment type="pathway">
    <text evidence="1">Amino-acid biosynthesis; L-isoleucine biosynthesis; L-isoleucine from 2-oxobutanoate: step 2/4.</text>
</comment>
<comment type="pathway">
    <text evidence="1">Amino-acid biosynthesis; L-valine biosynthesis; L-valine from pyruvate: step 2/4.</text>
</comment>
<comment type="similarity">
    <text evidence="1">Belongs to the ketol-acid reductoisomerase family.</text>
</comment>
<gene>
    <name evidence="1" type="primary">ilvC</name>
    <name type="ordered locus">BMASAVP1_A1115</name>
</gene>
<reference key="1">
    <citation type="journal article" date="2010" name="Genome Biol. Evol.">
        <title>Continuing evolution of Burkholderia mallei through genome reduction and large-scale rearrangements.</title>
        <authorList>
            <person name="Losada L."/>
            <person name="Ronning C.M."/>
            <person name="DeShazer D."/>
            <person name="Woods D."/>
            <person name="Fedorova N."/>
            <person name="Kim H.S."/>
            <person name="Shabalina S.A."/>
            <person name="Pearson T.R."/>
            <person name="Brinkac L."/>
            <person name="Tan P."/>
            <person name="Nandi T."/>
            <person name="Crabtree J."/>
            <person name="Badger J."/>
            <person name="Beckstrom-Sternberg S."/>
            <person name="Saqib M."/>
            <person name="Schutzer S.E."/>
            <person name="Keim P."/>
            <person name="Nierman W.C."/>
        </authorList>
    </citation>
    <scope>NUCLEOTIDE SEQUENCE [LARGE SCALE GENOMIC DNA]</scope>
    <source>
        <strain>SAVP1</strain>
    </source>
</reference>
<accession>A1V2K2</accession>
<keyword id="KW-0028">Amino-acid biosynthesis</keyword>
<keyword id="KW-0100">Branched-chain amino acid biosynthesis</keyword>
<keyword id="KW-0460">Magnesium</keyword>
<keyword id="KW-0479">Metal-binding</keyword>
<keyword id="KW-0521">NADP</keyword>
<keyword id="KW-0560">Oxidoreductase</keyword>
<evidence type="ECO:0000255" key="1">
    <source>
        <dbReference type="HAMAP-Rule" id="MF_00435"/>
    </source>
</evidence>
<evidence type="ECO:0000255" key="2">
    <source>
        <dbReference type="PROSITE-ProRule" id="PRU01197"/>
    </source>
</evidence>
<evidence type="ECO:0000255" key="3">
    <source>
        <dbReference type="PROSITE-ProRule" id="PRU01198"/>
    </source>
</evidence>
<protein>
    <recommendedName>
        <fullName evidence="1">Ketol-acid reductoisomerase (NADP(+))</fullName>
        <shortName evidence="1">KARI</shortName>
        <ecNumber evidence="1">1.1.1.86</ecNumber>
    </recommendedName>
    <alternativeName>
        <fullName evidence="1">Acetohydroxy-acid isomeroreductase</fullName>
        <shortName evidence="1">AHIR</shortName>
    </alternativeName>
    <alternativeName>
        <fullName evidence="1">Alpha-keto-beta-hydroxylacyl reductoisomerase</fullName>
    </alternativeName>
    <alternativeName>
        <fullName evidence="1">Ketol-acid reductoisomerase type 1</fullName>
    </alternativeName>
    <alternativeName>
        <fullName evidence="1">Ketol-acid reductoisomerase type I</fullName>
    </alternativeName>
</protein>
<sequence>MKVFYDKDADLSLIKGKQVTIIGYGSQGHAHALNLKDSGVNVTVGLRRGGASWSKAENAGLAVKEVAEAVKGADVVMMLLPDEQIAAVYAQEVHANIKEGAALAFAHGFNVHYGQVIPRADLDVIMVAPKAPGHTVRGTYAQGGGVPHLIAVAQDKSGAARDIALSYAAANGGGRAGIIETNFREETETDLFGEQAVLCGGTVELIKAGFETLVEAGYAPEMAYFECLHELKLIVDLIYEGGIANMNYSISNNAEYGEYVTGPRVVTEETKKAMKQCLTDIQTGEYAKSFILENKAGAPTLQSRRRLTAEHQIEQVGSKLRAMMPWIAKNKLVDQSKN</sequence>
<feature type="chain" id="PRO_1000050488" description="Ketol-acid reductoisomerase (NADP(+))">
    <location>
        <begin position="1"/>
        <end position="338"/>
    </location>
</feature>
<feature type="domain" description="KARI N-terminal Rossmann" evidence="2">
    <location>
        <begin position="1"/>
        <end position="181"/>
    </location>
</feature>
<feature type="domain" description="KARI C-terminal knotted" evidence="3">
    <location>
        <begin position="182"/>
        <end position="327"/>
    </location>
</feature>
<feature type="active site" evidence="1">
    <location>
        <position position="107"/>
    </location>
</feature>
<feature type="binding site" evidence="1">
    <location>
        <begin position="24"/>
        <end position="27"/>
    </location>
    <ligand>
        <name>NADP(+)</name>
        <dbReference type="ChEBI" id="CHEBI:58349"/>
    </ligand>
</feature>
<feature type="binding site" evidence="1">
    <location>
        <position position="47"/>
    </location>
    <ligand>
        <name>NADP(+)</name>
        <dbReference type="ChEBI" id="CHEBI:58349"/>
    </ligand>
</feature>
<feature type="binding site" evidence="1">
    <location>
        <position position="52"/>
    </location>
    <ligand>
        <name>NADP(+)</name>
        <dbReference type="ChEBI" id="CHEBI:58349"/>
    </ligand>
</feature>
<feature type="binding site" evidence="1">
    <location>
        <position position="133"/>
    </location>
    <ligand>
        <name>NADP(+)</name>
        <dbReference type="ChEBI" id="CHEBI:58349"/>
    </ligand>
</feature>
<feature type="binding site" evidence="1">
    <location>
        <position position="190"/>
    </location>
    <ligand>
        <name>Mg(2+)</name>
        <dbReference type="ChEBI" id="CHEBI:18420"/>
        <label>1</label>
    </ligand>
</feature>
<feature type="binding site" evidence="1">
    <location>
        <position position="190"/>
    </location>
    <ligand>
        <name>Mg(2+)</name>
        <dbReference type="ChEBI" id="CHEBI:18420"/>
        <label>2</label>
    </ligand>
</feature>
<feature type="binding site" evidence="1">
    <location>
        <position position="194"/>
    </location>
    <ligand>
        <name>Mg(2+)</name>
        <dbReference type="ChEBI" id="CHEBI:18420"/>
        <label>1</label>
    </ligand>
</feature>
<feature type="binding site" evidence="1">
    <location>
        <position position="226"/>
    </location>
    <ligand>
        <name>Mg(2+)</name>
        <dbReference type="ChEBI" id="CHEBI:18420"/>
        <label>2</label>
    </ligand>
</feature>
<feature type="binding site" evidence="1">
    <location>
        <position position="230"/>
    </location>
    <ligand>
        <name>Mg(2+)</name>
        <dbReference type="ChEBI" id="CHEBI:18420"/>
        <label>2</label>
    </ligand>
</feature>
<feature type="binding site" evidence="1">
    <location>
        <position position="251"/>
    </location>
    <ligand>
        <name>substrate</name>
    </ligand>
</feature>
<organism>
    <name type="scientific">Burkholderia mallei (strain SAVP1)</name>
    <dbReference type="NCBI Taxonomy" id="320388"/>
    <lineage>
        <taxon>Bacteria</taxon>
        <taxon>Pseudomonadati</taxon>
        <taxon>Pseudomonadota</taxon>
        <taxon>Betaproteobacteria</taxon>
        <taxon>Burkholderiales</taxon>
        <taxon>Burkholderiaceae</taxon>
        <taxon>Burkholderia</taxon>
        <taxon>pseudomallei group</taxon>
    </lineage>
</organism>
<proteinExistence type="inferred from homology"/>
<dbReference type="EC" id="1.1.1.86" evidence="1"/>
<dbReference type="EMBL" id="CP000526">
    <property type="protein sequence ID" value="ABM52605.1"/>
    <property type="molecule type" value="Genomic_DNA"/>
</dbReference>
<dbReference type="RefSeq" id="WP_004185539.1">
    <property type="nucleotide sequence ID" value="NC_008785.1"/>
</dbReference>
<dbReference type="SMR" id="A1V2K2"/>
<dbReference type="GeneID" id="93059680"/>
<dbReference type="KEGG" id="bmv:BMASAVP1_A1115"/>
<dbReference type="HOGENOM" id="CLU_033821_0_1_4"/>
<dbReference type="UniPathway" id="UPA00047">
    <property type="reaction ID" value="UER00056"/>
</dbReference>
<dbReference type="UniPathway" id="UPA00049">
    <property type="reaction ID" value="UER00060"/>
</dbReference>
<dbReference type="GO" id="GO:0005829">
    <property type="term" value="C:cytosol"/>
    <property type="evidence" value="ECO:0007669"/>
    <property type="project" value="TreeGrafter"/>
</dbReference>
<dbReference type="GO" id="GO:0004455">
    <property type="term" value="F:ketol-acid reductoisomerase activity"/>
    <property type="evidence" value="ECO:0007669"/>
    <property type="project" value="UniProtKB-UniRule"/>
</dbReference>
<dbReference type="GO" id="GO:0000287">
    <property type="term" value="F:magnesium ion binding"/>
    <property type="evidence" value="ECO:0007669"/>
    <property type="project" value="UniProtKB-UniRule"/>
</dbReference>
<dbReference type="GO" id="GO:0050661">
    <property type="term" value="F:NADP binding"/>
    <property type="evidence" value="ECO:0007669"/>
    <property type="project" value="InterPro"/>
</dbReference>
<dbReference type="GO" id="GO:0009097">
    <property type="term" value="P:isoleucine biosynthetic process"/>
    <property type="evidence" value="ECO:0007669"/>
    <property type="project" value="UniProtKB-UniRule"/>
</dbReference>
<dbReference type="GO" id="GO:0009099">
    <property type="term" value="P:L-valine biosynthetic process"/>
    <property type="evidence" value="ECO:0007669"/>
    <property type="project" value="UniProtKB-UniRule"/>
</dbReference>
<dbReference type="FunFam" id="3.40.50.720:FF:000023">
    <property type="entry name" value="Ketol-acid reductoisomerase (NADP(+))"/>
    <property type="match status" value="1"/>
</dbReference>
<dbReference type="Gene3D" id="6.10.240.10">
    <property type="match status" value="1"/>
</dbReference>
<dbReference type="Gene3D" id="3.40.50.720">
    <property type="entry name" value="NAD(P)-binding Rossmann-like Domain"/>
    <property type="match status" value="1"/>
</dbReference>
<dbReference type="HAMAP" id="MF_00435">
    <property type="entry name" value="IlvC"/>
    <property type="match status" value="1"/>
</dbReference>
<dbReference type="InterPro" id="IPR008927">
    <property type="entry name" value="6-PGluconate_DH-like_C_sf"/>
</dbReference>
<dbReference type="InterPro" id="IPR013023">
    <property type="entry name" value="KARI"/>
</dbReference>
<dbReference type="InterPro" id="IPR000506">
    <property type="entry name" value="KARI_C"/>
</dbReference>
<dbReference type="InterPro" id="IPR013116">
    <property type="entry name" value="KARI_N"/>
</dbReference>
<dbReference type="InterPro" id="IPR014359">
    <property type="entry name" value="KARI_prok"/>
</dbReference>
<dbReference type="InterPro" id="IPR036291">
    <property type="entry name" value="NAD(P)-bd_dom_sf"/>
</dbReference>
<dbReference type="NCBIfam" id="TIGR00465">
    <property type="entry name" value="ilvC"/>
    <property type="match status" value="1"/>
</dbReference>
<dbReference type="NCBIfam" id="NF004017">
    <property type="entry name" value="PRK05479.1"/>
    <property type="match status" value="1"/>
</dbReference>
<dbReference type="NCBIfam" id="NF009940">
    <property type="entry name" value="PRK13403.1"/>
    <property type="match status" value="1"/>
</dbReference>
<dbReference type="PANTHER" id="PTHR21371">
    <property type="entry name" value="KETOL-ACID REDUCTOISOMERASE, MITOCHONDRIAL"/>
    <property type="match status" value="1"/>
</dbReference>
<dbReference type="PANTHER" id="PTHR21371:SF1">
    <property type="entry name" value="KETOL-ACID REDUCTOISOMERASE, MITOCHONDRIAL"/>
    <property type="match status" value="1"/>
</dbReference>
<dbReference type="Pfam" id="PF01450">
    <property type="entry name" value="KARI_C"/>
    <property type="match status" value="1"/>
</dbReference>
<dbReference type="Pfam" id="PF07991">
    <property type="entry name" value="KARI_N"/>
    <property type="match status" value="1"/>
</dbReference>
<dbReference type="PIRSF" id="PIRSF000116">
    <property type="entry name" value="IlvC_gammaproteo"/>
    <property type="match status" value="1"/>
</dbReference>
<dbReference type="SUPFAM" id="SSF48179">
    <property type="entry name" value="6-phosphogluconate dehydrogenase C-terminal domain-like"/>
    <property type="match status" value="1"/>
</dbReference>
<dbReference type="SUPFAM" id="SSF51735">
    <property type="entry name" value="NAD(P)-binding Rossmann-fold domains"/>
    <property type="match status" value="1"/>
</dbReference>
<dbReference type="PROSITE" id="PS51851">
    <property type="entry name" value="KARI_C"/>
    <property type="match status" value="1"/>
</dbReference>
<dbReference type="PROSITE" id="PS51850">
    <property type="entry name" value="KARI_N"/>
    <property type="match status" value="1"/>
</dbReference>